<gene>
    <name type="primary">ygaC</name>
    <name type="ordered locus">BSU08680</name>
</gene>
<organism>
    <name type="scientific">Bacillus subtilis (strain 168)</name>
    <dbReference type="NCBI Taxonomy" id="224308"/>
    <lineage>
        <taxon>Bacteria</taxon>
        <taxon>Bacillati</taxon>
        <taxon>Bacillota</taxon>
        <taxon>Bacilli</taxon>
        <taxon>Bacillales</taxon>
        <taxon>Bacillaceae</taxon>
        <taxon>Bacillus</taxon>
    </lineage>
</organism>
<evidence type="ECO:0000255" key="1">
    <source>
        <dbReference type="HAMAP-Rule" id="MF_01568"/>
    </source>
</evidence>
<evidence type="ECO:0000305" key="2"/>
<dbReference type="EC" id="3.6.1.15" evidence="1"/>
<dbReference type="EC" id="3.6.1.6" evidence="1"/>
<dbReference type="EMBL" id="Z82044">
    <property type="protein sequence ID" value="CAB04796.1"/>
    <property type="status" value="ALT_FRAME"/>
    <property type="molecule type" value="Genomic_DNA"/>
</dbReference>
<dbReference type="EMBL" id="AL009126">
    <property type="protein sequence ID" value="CAB12696.3"/>
    <property type="molecule type" value="Genomic_DNA"/>
</dbReference>
<dbReference type="PIR" id="F69815">
    <property type="entry name" value="F69815"/>
</dbReference>
<dbReference type="RefSeq" id="NP_388748.3">
    <property type="nucleotide sequence ID" value="NC_000964.3"/>
</dbReference>
<dbReference type="RefSeq" id="WP_003223272.1">
    <property type="nucleotide sequence ID" value="NZ_OZ025638.1"/>
</dbReference>
<dbReference type="SMR" id="Q796Z1"/>
<dbReference type="FunCoup" id="Q796Z1">
    <property type="interactions" value="3"/>
</dbReference>
<dbReference type="STRING" id="224308.BSU08680"/>
<dbReference type="PaxDb" id="224308-BSU08680"/>
<dbReference type="EnsemblBacteria" id="CAB12696">
    <property type="protein sequence ID" value="CAB12696"/>
    <property type="gene ID" value="BSU_08680"/>
</dbReference>
<dbReference type="GeneID" id="936192"/>
<dbReference type="KEGG" id="bsu:BSU08680"/>
<dbReference type="PATRIC" id="fig|224308.179.peg.936"/>
<dbReference type="eggNOG" id="COG3557">
    <property type="taxonomic scope" value="Bacteria"/>
</dbReference>
<dbReference type="InParanoid" id="Q796Z1"/>
<dbReference type="OrthoDB" id="1645325at2"/>
<dbReference type="PhylomeDB" id="Q796Z1"/>
<dbReference type="BioCyc" id="BSUB:BSU08680-MONOMER"/>
<dbReference type="PRO" id="PR:Q796Z1"/>
<dbReference type="Proteomes" id="UP000001570">
    <property type="component" value="Chromosome"/>
</dbReference>
<dbReference type="GO" id="GO:0000287">
    <property type="term" value="F:magnesium ion binding"/>
    <property type="evidence" value="ECO:0007669"/>
    <property type="project" value="UniProtKB-UniRule"/>
</dbReference>
<dbReference type="GO" id="GO:0017110">
    <property type="term" value="F:nucleoside diphosphate phosphatase activity"/>
    <property type="evidence" value="ECO:0007669"/>
    <property type="project" value="UniProtKB-UniRule"/>
</dbReference>
<dbReference type="GO" id="GO:0017111">
    <property type="term" value="F:ribonucleoside triphosphate phosphatase activity"/>
    <property type="evidence" value="ECO:0007669"/>
    <property type="project" value="UniProtKB-UniRule"/>
</dbReference>
<dbReference type="Gene3D" id="2.40.380.10">
    <property type="entry name" value="FomD-like"/>
    <property type="match status" value="1"/>
</dbReference>
<dbReference type="HAMAP" id="MF_01568">
    <property type="entry name" value="Ntdp"/>
    <property type="match status" value="1"/>
</dbReference>
<dbReference type="InterPro" id="IPR007295">
    <property type="entry name" value="DUF402"/>
</dbReference>
<dbReference type="InterPro" id="IPR035930">
    <property type="entry name" value="FomD-like_sf"/>
</dbReference>
<dbReference type="InterPro" id="IPR050212">
    <property type="entry name" value="Ntdp-like"/>
</dbReference>
<dbReference type="InterPro" id="IPR016882">
    <property type="entry name" value="SA1684"/>
</dbReference>
<dbReference type="NCBIfam" id="NF010183">
    <property type="entry name" value="PRK13662.1"/>
    <property type="match status" value="1"/>
</dbReference>
<dbReference type="PANTHER" id="PTHR39159">
    <property type="match status" value="1"/>
</dbReference>
<dbReference type="PANTHER" id="PTHR39159:SF1">
    <property type="entry name" value="UPF0374 PROTEIN YGAC"/>
    <property type="match status" value="1"/>
</dbReference>
<dbReference type="Pfam" id="PF04167">
    <property type="entry name" value="DUF402"/>
    <property type="match status" value="1"/>
</dbReference>
<dbReference type="PIRSF" id="PIRSF028345">
    <property type="entry name" value="UCP028345"/>
    <property type="match status" value="1"/>
</dbReference>
<dbReference type="SUPFAM" id="SSF159234">
    <property type="entry name" value="FomD-like"/>
    <property type="match status" value="1"/>
</dbReference>
<sequence>MGYPKEGETIQIHSYKHNGLIHRIWNETTILKSTEMCVIGANDRTMVTESDGRTWITREPAICYFHARQWFNVIGMLREDGVHYYCNISSPFAYDGEAIKYIDYDLDVKVFPDMTYNILDEDEYDDHRKAMNYPKEIDSILRDYLNTLLHWIHQRQGPFAPEFVDMWYERYLRYTK</sequence>
<feature type="chain" id="PRO_0000248092" description="Nucleoside triphosphate/diphosphate phosphatase">
    <location>
        <begin position="1"/>
        <end position="176"/>
    </location>
</feature>
<feature type="active site" description="Proton donor" evidence="1">
    <location>
        <position position="23"/>
    </location>
</feature>
<feature type="binding site" evidence="1">
    <location>
        <position position="87"/>
    </location>
    <ligand>
        <name>Mg(2+)</name>
        <dbReference type="ChEBI" id="CHEBI:18420"/>
        <label>1</label>
    </ligand>
</feature>
<feature type="binding site" evidence="1">
    <location>
        <position position="103"/>
    </location>
    <ligand>
        <name>Mg(2+)</name>
        <dbReference type="ChEBI" id="CHEBI:18420"/>
        <label>1</label>
    </ligand>
</feature>
<feature type="binding site" evidence="1">
    <location>
        <position position="105"/>
    </location>
    <ligand>
        <name>Mg(2+)</name>
        <dbReference type="ChEBI" id="CHEBI:18420"/>
        <label>2</label>
    </ligand>
</feature>
<feature type="binding site" evidence="1">
    <location>
        <position position="107"/>
    </location>
    <ligand>
        <name>Mg(2+)</name>
        <dbReference type="ChEBI" id="CHEBI:18420"/>
        <label>1</label>
    </ligand>
</feature>
<feature type="binding site" evidence="1">
    <location>
        <position position="107"/>
    </location>
    <ligand>
        <name>Mg(2+)</name>
        <dbReference type="ChEBI" id="CHEBI:18420"/>
        <label>2</label>
    </ligand>
</feature>
<feature type="binding site" evidence="1">
    <location>
        <position position="120"/>
    </location>
    <ligand>
        <name>Mg(2+)</name>
        <dbReference type="ChEBI" id="CHEBI:18420"/>
        <label>2</label>
    </ligand>
</feature>
<feature type="binding site" evidence="1">
    <location>
        <position position="123"/>
    </location>
    <ligand>
        <name>Mg(2+)</name>
        <dbReference type="ChEBI" id="CHEBI:18420"/>
        <label>2</label>
    </ligand>
</feature>
<feature type="sequence conflict" description="In Ref. 1; CAB04796." evidence="2" ref="1">
    <original>F</original>
    <variation>Y</variation>
    <location>
        <position position="159"/>
    </location>
</feature>
<proteinExistence type="inferred from homology"/>
<comment type="function">
    <text evidence="1">Has nucleoside phosphatase activity towards nucleoside triphosphates and nucleoside diphosphates.</text>
</comment>
<comment type="catalytic activity">
    <reaction evidence="1">
        <text>a ribonucleoside 5'-triphosphate + H2O = a ribonucleoside 5'-diphosphate + phosphate + H(+)</text>
        <dbReference type="Rhea" id="RHEA:23680"/>
        <dbReference type="ChEBI" id="CHEBI:15377"/>
        <dbReference type="ChEBI" id="CHEBI:15378"/>
        <dbReference type="ChEBI" id="CHEBI:43474"/>
        <dbReference type="ChEBI" id="CHEBI:57930"/>
        <dbReference type="ChEBI" id="CHEBI:61557"/>
        <dbReference type="EC" id="3.6.1.15"/>
    </reaction>
</comment>
<comment type="catalytic activity">
    <reaction evidence="1">
        <text>a ribonucleoside 5'-diphosphate + H2O = a ribonucleoside 5'-phosphate + phosphate + H(+)</text>
        <dbReference type="Rhea" id="RHEA:36799"/>
        <dbReference type="ChEBI" id="CHEBI:15377"/>
        <dbReference type="ChEBI" id="CHEBI:15378"/>
        <dbReference type="ChEBI" id="CHEBI:43474"/>
        <dbReference type="ChEBI" id="CHEBI:57930"/>
        <dbReference type="ChEBI" id="CHEBI:58043"/>
        <dbReference type="EC" id="3.6.1.6"/>
    </reaction>
</comment>
<comment type="cofactor">
    <cofactor evidence="1">
        <name>Mg(2+)</name>
        <dbReference type="ChEBI" id="CHEBI:18420"/>
    </cofactor>
</comment>
<comment type="similarity">
    <text evidence="1">Belongs to the Ntdp family.</text>
</comment>
<comment type="sequence caution" evidence="2">
    <conflict type="frameshift">
        <sequence resource="EMBL-CDS" id="CAB04796"/>
    </conflict>
</comment>
<reference key="1">
    <citation type="journal article" date="1997" name="Microbiology">
        <title>The Bacillus subtilis 168 chromosome from sspE to katA.</title>
        <authorList>
            <person name="Cummings N.J."/>
            <person name="Connerton I.F."/>
        </authorList>
    </citation>
    <scope>NUCLEOTIDE SEQUENCE [GENOMIC DNA]</scope>
    <source>
        <strain>168</strain>
    </source>
</reference>
<reference key="2">
    <citation type="journal article" date="1997" name="Nature">
        <title>The complete genome sequence of the Gram-positive bacterium Bacillus subtilis.</title>
        <authorList>
            <person name="Kunst F."/>
            <person name="Ogasawara N."/>
            <person name="Moszer I."/>
            <person name="Albertini A.M."/>
            <person name="Alloni G."/>
            <person name="Azevedo V."/>
            <person name="Bertero M.G."/>
            <person name="Bessieres P."/>
            <person name="Bolotin A."/>
            <person name="Borchert S."/>
            <person name="Borriss R."/>
            <person name="Boursier L."/>
            <person name="Brans A."/>
            <person name="Braun M."/>
            <person name="Brignell S.C."/>
            <person name="Bron S."/>
            <person name="Brouillet S."/>
            <person name="Bruschi C.V."/>
            <person name="Caldwell B."/>
            <person name="Capuano V."/>
            <person name="Carter N.M."/>
            <person name="Choi S.-K."/>
            <person name="Codani J.-J."/>
            <person name="Connerton I.F."/>
            <person name="Cummings N.J."/>
            <person name="Daniel R.A."/>
            <person name="Denizot F."/>
            <person name="Devine K.M."/>
            <person name="Duesterhoeft A."/>
            <person name="Ehrlich S.D."/>
            <person name="Emmerson P.T."/>
            <person name="Entian K.-D."/>
            <person name="Errington J."/>
            <person name="Fabret C."/>
            <person name="Ferrari E."/>
            <person name="Foulger D."/>
            <person name="Fritz C."/>
            <person name="Fujita M."/>
            <person name="Fujita Y."/>
            <person name="Fuma S."/>
            <person name="Galizzi A."/>
            <person name="Galleron N."/>
            <person name="Ghim S.-Y."/>
            <person name="Glaser P."/>
            <person name="Goffeau A."/>
            <person name="Golightly E.J."/>
            <person name="Grandi G."/>
            <person name="Guiseppi G."/>
            <person name="Guy B.J."/>
            <person name="Haga K."/>
            <person name="Haiech J."/>
            <person name="Harwood C.R."/>
            <person name="Henaut A."/>
            <person name="Hilbert H."/>
            <person name="Holsappel S."/>
            <person name="Hosono S."/>
            <person name="Hullo M.-F."/>
            <person name="Itaya M."/>
            <person name="Jones L.-M."/>
            <person name="Joris B."/>
            <person name="Karamata D."/>
            <person name="Kasahara Y."/>
            <person name="Klaerr-Blanchard M."/>
            <person name="Klein C."/>
            <person name="Kobayashi Y."/>
            <person name="Koetter P."/>
            <person name="Koningstein G."/>
            <person name="Krogh S."/>
            <person name="Kumano M."/>
            <person name="Kurita K."/>
            <person name="Lapidus A."/>
            <person name="Lardinois S."/>
            <person name="Lauber J."/>
            <person name="Lazarevic V."/>
            <person name="Lee S.-M."/>
            <person name="Levine A."/>
            <person name="Liu H."/>
            <person name="Masuda S."/>
            <person name="Mauel C."/>
            <person name="Medigue C."/>
            <person name="Medina N."/>
            <person name="Mellado R.P."/>
            <person name="Mizuno M."/>
            <person name="Moestl D."/>
            <person name="Nakai S."/>
            <person name="Noback M."/>
            <person name="Noone D."/>
            <person name="O'Reilly M."/>
            <person name="Ogawa K."/>
            <person name="Ogiwara A."/>
            <person name="Oudega B."/>
            <person name="Park S.-H."/>
            <person name="Parro V."/>
            <person name="Pohl T.M."/>
            <person name="Portetelle D."/>
            <person name="Porwollik S."/>
            <person name="Prescott A.M."/>
            <person name="Presecan E."/>
            <person name="Pujic P."/>
            <person name="Purnelle B."/>
            <person name="Rapoport G."/>
            <person name="Rey M."/>
            <person name="Reynolds S."/>
            <person name="Rieger M."/>
            <person name="Rivolta C."/>
            <person name="Rocha E."/>
            <person name="Roche B."/>
            <person name="Rose M."/>
            <person name="Sadaie Y."/>
            <person name="Sato T."/>
            <person name="Scanlan E."/>
            <person name="Schleich S."/>
            <person name="Schroeter R."/>
            <person name="Scoffone F."/>
            <person name="Sekiguchi J."/>
            <person name="Sekowska A."/>
            <person name="Seror S.J."/>
            <person name="Serror P."/>
            <person name="Shin B.-S."/>
            <person name="Soldo B."/>
            <person name="Sorokin A."/>
            <person name="Tacconi E."/>
            <person name="Takagi T."/>
            <person name="Takahashi H."/>
            <person name="Takemaru K."/>
            <person name="Takeuchi M."/>
            <person name="Tamakoshi A."/>
            <person name="Tanaka T."/>
            <person name="Terpstra P."/>
            <person name="Tognoni A."/>
            <person name="Tosato V."/>
            <person name="Uchiyama S."/>
            <person name="Vandenbol M."/>
            <person name="Vannier F."/>
            <person name="Vassarotti A."/>
            <person name="Viari A."/>
            <person name="Wambutt R."/>
            <person name="Wedler E."/>
            <person name="Wedler H."/>
            <person name="Weitzenegger T."/>
            <person name="Winters P."/>
            <person name="Wipat A."/>
            <person name="Yamamoto H."/>
            <person name="Yamane K."/>
            <person name="Yasumoto K."/>
            <person name="Yata K."/>
            <person name="Yoshida K."/>
            <person name="Yoshikawa H.-F."/>
            <person name="Zumstein E."/>
            <person name="Yoshikawa H."/>
            <person name="Danchin A."/>
        </authorList>
    </citation>
    <scope>NUCLEOTIDE SEQUENCE [LARGE SCALE GENOMIC DNA]</scope>
    <source>
        <strain>168</strain>
    </source>
</reference>
<reference key="3">
    <citation type="journal article" date="2009" name="Microbiology">
        <title>From a consortium sequence to a unified sequence: the Bacillus subtilis 168 reference genome a decade later.</title>
        <authorList>
            <person name="Barbe V."/>
            <person name="Cruveiller S."/>
            <person name="Kunst F."/>
            <person name="Lenoble P."/>
            <person name="Meurice G."/>
            <person name="Sekowska A."/>
            <person name="Vallenet D."/>
            <person name="Wang T."/>
            <person name="Moszer I."/>
            <person name="Medigue C."/>
            <person name="Danchin A."/>
        </authorList>
    </citation>
    <scope>SEQUENCE REVISION TO 159</scope>
</reference>
<keyword id="KW-0378">Hydrolase</keyword>
<keyword id="KW-0460">Magnesium</keyword>
<keyword id="KW-0479">Metal-binding</keyword>
<keyword id="KW-1185">Reference proteome</keyword>
<name>NTDP_BACSU</name>
<accession>Q796Z1</accession>
<accession>P71081</accession>
<protein>
    <recommendedName>
        <fullName evidence="1">Nucleoside triphosphate/diphosphate phosphatase</fullName>
        <ecNumber evidence="1">3.6.1.15</ecNumber>
        <ecNumber evidence="1">3.6.1.6</ecNumber>
    </recommendedName>
</protein>